<accession>O95168</accession>
<accession>B2RUY3</accession>
<accession>B9EJC7</accession>
<name>NDUB4_HUMAN</name>
<feature type="initiator methionine" description="Removed" evidence="7">
    <location>
        <position position="1"/>
    </location>
</feature>
<feature type="chain" id="PRO_0000118800" description="NADH dehydrogenase [ubiquinone] 1 beta subcomplex subunit 4">
    <location>
        <begin position="2"/>
        <end position="129"/>
    </location>
</feature>
<feature type="transmembrane region" description="Helical" evidence="1">
    <location>
        <begin position="88"/>
        <end position="105"/>
    </location>
</feature>
<feature type="modified residue" description="N-acetylserine" evidence="7">
    <location>
        <position position="2"/>
    </location>
</feature>
<feature type="modified residue" description="Phosphoserine" evidence="8">
    <location>
        <position position="26"/>
    </location>
</feature>
<feature type="splice variant" id="VSP_042719" description="In isoform 2." evidence="4">
    <original>DRKEKLIQEGKLDRTFHLSY</original>
    <variation>VSIQTRCLVFE</variation>
    <location>
        <begin position="110"/>
        <end position="129"/>
    </location>
</feature>
<organism>
    <name type="scientific">Homo sapiens</name>
    <name type="common">Human</name>
    <dbReference type="NCBI Taxonomy" id="9606"/>
    <lineage>
        <taxon>Eukaryota</taxon>
        <taxon>Metazoa</taxon>
        <taxon>Chordata</taxon>
        <taxon>Craniata</taxon>
        <taxon>Vertebrata</taxon>
        <taxon>Euteleostomi</taxon>
        <taxon>Mammalia</taxon>
        <taxon>Eutheria</taxon>
        <taxon>Euarchontoglires</taxon>
        <taxon>Primates</taxon>
        <taxon>Haplorrhini</taxon>
        <taxon>Catarrhini</taxon>
        <taxon>Hominidae</taxon>
        <taxon>Homo</taxon>
    </lineage>
</organism>
<gene>
    <name type="primary">NDUFB4</name>
</gene>
<proteinExistence type="evidence at protein level"/>
<comment type="function">
    <text evidence="3">Accessory subunit of the mitochondrial membrane respiratory chain NADH dehydrogenase (Complex I), that is believed not to be involved in catalysis. Complex I functions in the transfer of electrons from NADH to the respiratory chain. The immediate electron acceptor for the enzyme is believed to be ubiquinone.</text>
</comment>
<comment type="subunit">
    <text evidence="2 3">Complex I is composed of 45 different subunits.</text>
</comment>
<comment type="subcellular location">
    <subcellularLocation>
        <location evidence="6">Mitochondrion inner membrane</location>
        <topology evidence="1">Single-pass membrane protein</topology>
        <orientation evidence="5">Matrix side</orientation>
    </subcellularLocation>
</comment>
<comment type="alternative products">
    <event type="alternative splicing"/>
    <isoform>
        <id>O95168-1</id>
        <name>1</name>
        <sequence type="displayed"/>
    </isoform>
    <isoform>
        <id>O95168-2</id>
        <name>2</name>
        <sequence type="described" ref="VSP_042719"/>
    </isoform>
</comment>
<comment type="similarity">
    <text evidence="5">Belongs to the complex I NDUFB4 subunit family.</text>
</comment>
<evidence type="ECO:0000255" key="1"/>
<evidence type="ECO:0000269" key="2">
    <source>
    </source>
</evidence>
<evidence type="ECO:0000269" key="3">
    <source>
    </source>
</evidence>
<evidence type="ECO:0000303" key="4">
    <source>
    </source>
</evidence>
<evidence type="ECO:0000305" key="5"/>
<evidence type="ECO:0000305" key="6">
    <source>
    </source>
</evidence>
<evidence type="ECO:0007744" key="7">
    <source>
    </source>
</evidence>
<evidence type="ECO:0007744" key="8">
    <source>
    </source>
</evidence>
<dbReference type="EMBL" id="AF044957">
    <property type="protein sequence ID" value="AAD05421.1"/>
    <property type="molecule type" value="mRNA"/>
</dbReference>
<dbReference type="EMBL" id="AC126182">
    <property type="status" value="NOT_ANNOTATED_CDS"/>
    <property type="molecule type" value="Genomic_DNA"/>
</dbReference>
<dbReference type="EMBL" id="CH471052">
    <property type="protein sequence ID" value="EAW79525.1"/>
    <property type="molecule type" value="Genomic_DNA"/>
</dbReference>
<dbReference type="EMBL" id="BC000855">
    <property type="protein sequence ID" value="AAH00855.1"/>
    <property type="molecule type" value="mRNA"/>
</dbReference>
<dbReference type="EMBL" id="BC070285">
    <property type="protein sequence ID" value="AAH70285.1"/>
    <property type="molecule type" value="mRNA"/>
</dbReference>
<dbReference type="EMBL" id="BC146885">
    <property type="protein sequence ID" value="AAI46886.1"/>
    <property type="molecule type" value="mRNA"/>
</dbReference>
<dbReference type="EMBL" id="BC146887">
    <property type="protein sequence ID" value="AAI46888.1"/>
    <property type="molecule type" value="mRNA"/>
</dbReference>
<dbReference type="EMBL" id="BC146927">
    <property type="protein sequence ID" value="AAI46928.1"/>
    <property type="molecule type" value="mRNA"/>
</dbReference>
<dbReference type="EMBL" id="BC146932">
    <property type="protein sequence ID" value="AAI46933.1"/>
    <property type="molecule type" value="mRNA"/>
</dbReference>
<dbReference type="CCDS" id="CCDS2999.1">
    <molecule id="O95168-1"/>
</dbReference>
<dbReference type="CCDS" id="CCDS54630.1">
    <molecule id="O95168-2"/>
</dbReference>
<dbReference type="PIR" id="JE0383">
    <property type="entry name" value="JE0383"/>
</dbReference>
<dbReference type="RefSeq" id="NP_001161803.1">
    <molecule id="O95168-2"/>
    <property type="nucleotide sequence ID" value="NM_001168331.2"/>
</dbReference>
<dbReference type="RefSeq" id="NP_004538.2">
    <molecule id="O95168-1"/>
    <property type="nucleotide sequence ID" value="NM_004547.5"/>
</dbReference>
<dbReference type="PDB" id="5XTC">
    <property type="method" value="EM"/>
    <property type="resolution" value="3.70 A"/>
    <property type="chains" value="o=2-129"/>
</dbReference>
<dbReference type="PDB" id="5XTD">
    <property type="method" value="EM"/>
    <property type="resolution" value="3.70 A"/>
    <property type="chains" value="o=2-129"/>
</dbReference>
<dbReference type="PDB" id="5XTH">
    <property type="method" value="EM"/>
    <property type="resolution" value="3.90 A"/>
    <property type="chains" value="o=2-129"/>
</dbReference>
<dbReference type="PDB" id="5XTI">
    <property type="method" value="EM"/>
    <property type="resolution" value="17.40 A"/>
    <property type="chains" value="Bo/o=2-129"/>
</dbReference>
<dbReference type="PDBsum" id="5XTC"/>
<dbReference type="PDBsum" id="5XTD"/>
<dbReference type="PDBsum" id="5XTH"/>
<dbReference type="PDBsum" id="5XTI"/>
<dbReference type="SMR" id="O95168"/>
<dbReference type="BioGRID" id="110790">
    <property type="interactions" value="89"/>
</dbReference>
<dbReference type="ComplexPortal" id="CPX-577">
    <property type="entry name" value="Mitochondrial respiratory chain complex I"/>
</dbReference>
<dbReference type="CORUM" id="O95168"/>
<dbReference type="FunCoup" id="O95168">
    <property type="interactions" value="986"/>
</dbReference>
<dbReference type="IntAct" id="O95168">
    <property type="interactions" value="51"/>
</dbReference>
<dbReference type="MINT" id="O95168"/>
<dbReference type="STRING" id="9606.ENSP00000184266"/>
<dbReference type="BindingDB" id="O95168"/>
<dbReference type="ChEMBL" id="CHEMBL2363065"/>
<dbReference type="DrugBank" id="DB00157">
    <property type="generic name" value="NADH"/>
</dbReference>
<dbReference type="DrugCentral" id="O95168"/>
<dbReference type="iPTMnet" id="O95168"/>
<dbReference type="PhosphoSitePlus" id="O95168"/>
<dbReference type="SwissPalm" id="O95168"/>
<dbReference type="BioMuta" id="NDUFB4"/>
<dbReference type="jPOST" id="O95168"/>
<dbReference type="MassIVE" id="O95168"/>
<dbReference type="PaxDb" id="9606-ENSP00000184266"/>
<dbReference type="PeptideAtlas" id="O95168"/>
<dbReference type="ProteomicsDB" id="50681">
    <molecule id="O95168-1"/>
</dbReference>
<dbReference type="ProteomicsDB" id="50682">
    <molecule id="O95168-2"/>
</dbReference>
<dbReference type="Pumba" id="O95168"/>
<dbReference type="TopDownProteomics" id="O95168-1">
    <molecule id="O95168-1"/>
</dbReference>
<dbReference type="Antibodypedia" id="32798">
    <property type="antibodies" value="78 antibodies from 24 providers"/>
</dbReference>
<dbReference type="DNASU" id="4710"/>
<dbReference type="Ensembl" id="ENST00000184266.3">
    <molecule id="O95168-1"/>
    <property type="protein sequence ID" value="ENSP00000184266.2"/>
    <property type="gene ID" value="ENSG00000065518.8"/>
</dbReference>
<dbReference type="Ensembl" id="ENST00000485064.1">
    <molecule id="O95168-2"/>
    <property type="protein sequence ID" value="ENSP00000419578.1"/>
    <property type="gene ID" value="ENSG00000065518.8"/>
</dbReference>
<dbReference type="GeneID" id="4710"/>
<dbReference type="KEGG" id="hsa:4710"/>
<dbReference type="MANE-Select" id="ENST00000184266.3">
    <property type="protein sequence ID" value="ENSP00000184266.2"/>
    <property type="RefSeq nucleotide sequence ID" value="NM_004547.6"/>
    <property type="RefSeq protein sequence ID" value="NP_004538.2"/>
</dbReference>
<dbReference type="UCSC" id="uc003edt.4">
    <molecule id="O95168-1"/>
    <property type="organism name" value="human"/>
</dbReference>
<dbReference type="AGR" id="HGNC:7699"/>
<dbReference type="CTD" id="4710"/>
<dbReference type="DisGeNET" id="4710"/>
<dbReference type="GeneCards" id="NDUFB4"/>
<dbReference type="HGNC" id="HGNC:7699">
    <property type="gene designation" value="NDUFB4"/>
</dbReference>
<dbReference type="HPA" id="ENSG00000065518">
    <property type="expression patterns" value="Tissue enhanced (skeletal)"/>
</dbReference>
<dbReference type="MalaCards" id="NDUFB4"/>
<dbReference type="MIM" id="603840">
    <property type="type" value="gene"/>
</dbReference>
<dbReference type="neXtProt" id="NX_O95168"/>
<dbReference type="OpenTargets" id="ENSG00000065518"/>
<dbReference type="PharmGKB" id="PA31510"/>
<dbReference type="VEuPathDB" id="HostDB:ENSG00000065518"/>
<dbReference type="eggNOG" id="ENOG502S2HF">
    <property type="taxonomic scope" value="Eukaryota"/>
</dbReference>
<dbReference type="GeneTree" id="ENSGT00390000007133"/>
<dbReference type="HOGENOM" id="CLU_123402_0_0_1"/>
<dbReference type="InParanoid" id="O95168"/>
<dbReference type="OMA" id="REYLLHY"/>
<dbReference type="OrthoDB" id="5818798at2759"/>
<dbReference type="PAN-GO" id="O95168">
    <property type="GO annotations" value="1 GO annotation based on evolutionary models"/>
</dbReference>
<dbReference type="PhylomeDB" id="O95168"/>
<dbReference type="TreeFam" id="TF328761"/>
<dbReference type="BioCyc" id="MetaCyc:HS00843-MONOMER"/>
<dbReference type="PathwayCommons" id="O95168"/>
<dbReference type="Reactome" id="R-HSA-611105">
    <property type="pathway name" value="Respiratory electron transport"/>
</dbReference>
<dbReference type="Reactome" id="R-HSA-6799198">
    <property type="pathway name" value="Complex I biogenesis"/>
</dbReference>
<dbReference type="SignaLink" id="O95168"/>
<dbReference type="SIGNOR" id="O95168"/>
<dbReference type="BioGRID-ORCS" id="4710">
    <property type="hits" value="417 hits in 1167 CRISPR screens"/>
</dbReference>
<dbReference type="ChiTaRS" id="NDUFB4">
    <property type="organism name" value="human"/>
</dbReference>
<dbReference type="GenomeRNAi" id="4710"/>
<dbReference type="Pharos" id="O95168">
    <property type="development level" value="Tclin"/>
</dbReference>
<dbReference type="PRO" id="PR:O95168"/>
<dbReference type="Proteomes" id="UP000005640">
    <property type="component" value="Chromosome 3"/>
</dbReference>
<dbReference type="RNAct" id="O95168">
    <property type="molecule type" value="protein"/>
</dbReference>
<dbReference type="Bgee" id="ENSG00000065518">
    <property type="expression patterns" value="Expressed in heart right ventricle and 208 other cell types or tissues"/>
</dbReference>
<dbReference type="ExpressionAtlas" id="O95168">
    <property type="expression patterns" value="baseline and differential"/>
</dbReference>
<dbReference type="GO" id="GO:0005743">
    <property type="term" value="C:mitochondrial inner membrane"/>
    <property type="evidence" value="ECO:0000314"/>
    <property type="project" value="ComplexPortal"/>
</dbReference>
<dbReference type="GO" id="GO:0005739">
    <property type="term" value="C:mitochondrion"/>
    <property type="evidence" value="ECO:0000314"/>
    <property type="project" value="HPA"/>
</dbReference>
<dbReference type="GO" id="GO:0005654">
    <property type="term" value="C:nucleoplasm"/>
    <property type="evidence" value="ECO:0000314"/>
    <property type="project" value="HPA"/>
</dbReference>
<dbReference type="GO" id="GO:0045271">
    <property type="term" value="C:respiratory chain complex I"/>
    <property type="evidence" value="ECO:0000314"/>
    <property type="project" value="UniProtKB"/>
</dbReference>
<dbReference type="GO" id="GO:0008137">
    <property type="term" value="F:NADH dehydrogenase (ubiquinone) activity"/>
    <property type="evidence" value="ECO:0000303"/>
    <property type="project" value="UniProtKB"/>
</dbReference>
<dbReference type="GO" id="GO:0009060">
    <property type="term" value="P:aerobic respiration"/>
    <property type="evidence" value="ECO:0000303"/>
    <property type="project" value="ComplexPortal"/>
</dbReference>
<dbReference type="GO" id="GO:0006120">
    <property type="term" value="P:mitochondrial electron transport, NADH to ubiquinone"/>
    <property type="evidence" value="ECO:0000303"/>
    <property type="project" value="UniProtKB"/>
</dbReference>
<dbReference type="GO" id="GO:0042776">
    <property type="term" value="P:proton motive force-driven mitochondrial ATP synthesis"/>
    <property type="evidence" value="ECO:0000303"/>
    <property type="project" value="ComplexPortal"/>
</dbReference>
<dbReference type="InterPro" id="IPR009866">
    <property type="entry name" value="NADH_UbQ_OxRdtase_NDUFB4_su"/>
</dbReference>
<dbReference type="PANTHER" id="PTHR15469:SF1">
    <property type="entry name" value="NADH DEHYDROGENASE [UBIQUINONE] 1 BETA SUBCOMPLEX SUBUNIT 4"/>
    <property type="match status" value="1"/>
</dbReference>
<dbReference type="PANTHER" id="PTHR15469">
    <property type="entry name" value="NADH-UBIQUINONE OXIDOREDUCTASE B15 SUBUNIT"/>
    <property type="match status" value="1"/>
</dbReference>
<dbReference type="Pfam" id="PF07225">
    <property type="entry name" value="NDUF_B4"/>
    <property type="match status" value="1"/>
</dbReference>
<reference key="1">
    <citation type="journal article" date="1998" name="Biochem. Biophys. Res. Commun.">
        <title>cDNA of eight nuclear encoded subunits of NADH:ubiquinone oxidoreductase: human complex I cDNA characterization completed.</title>
        <authorList>
            <person name="Loeffen J.L.C.M."/>
            <person name="Triepels R.H."/>
            <person name="van den Heuvel L.P."/>
            <person name="Schuelke M."/>
            <person name="Buskens C.A.F."/>
            <person name="Smeets R.J.P."/>
            <person name="Trijbels J.M.F."/>
            <person name="Smeitink J.A.M."/>
        </authorList>
    </citation>
    <scope>NUCLEOTIDE SEQUENCE [MRNA] (ISOFORM 1)</scope>
</reference>
<reference key="2">
    <citation type="journal article" date="2006" name="Nature">
        <title>The DNA sequence, annotation and analysis of human chromosome 3.</title>
        <authorList>
            <person name="Muzny D.M."/>
            <person name="Scherer S.E."/>
            <person name="Kaul R."/>
            <person name="Wang J."/>
            <person name="Yu J."/>
            <person name="Sudbrak R."/>
            <person name="Buhay C.J."/>
            <person name="Chen R."/>
            <person name="Cree A."/>
            <person name="Ding Y."/>
            <person name="Dugan-Rocha S."/>
            <person name="Gill R."/>
            <person name="Gunaratne P."/>
            <person name="Harris R.A."/>
            <person name="Hawes A.C."/>
            <person name="Hernandez J."/>
            <person name="Hodgson A.V."/>
            <person name="Hume J."/>
            <person name="Jackson A."/>
            <person name="Khan Z.M."/>
            <person name="Kovar-Smith C."/>
            <person name="Lewis L.R."/>
            <person name="Lozado R.J."/>
            <person name="Metzker M.L."/>
            <person name="Milosavljevic A."/>
            <person name="Miner G.R."/>
            <person name="Morgan M.B."/>
            <person name="Nazareth L.V."/>
            <person name="Scott G."/>
            <person name="Sodergren E."/>
            <person name="Song X.-Z."/>
            <person name="Steffen D."/>
            <person name="Wei S."/>
            <person name="Wheeler D.A."/>
            <person name="Wright M.W."/>
            <person name="Worley K.C."/>
            <person name="Yuan Y."/>
            <person name="Zhang Z."/>
            <person name="Adams C.Q."/>
            <person name="Ansari-Lari M.A."/>
            <person name="Ayele M."/>
            <person name="Brown M.J."/>
            <person name="Chen G."/>
            <person name="Chen Z."/>
            <person name="Clendenning J."/>
            <person name="Clerc-Blankenburg K.P."/>
            <person name="Chen R."/>
            <person name="Chen Z."/>
            <person name="Davis C."/>
            <person name="Delgado O."/>
            <person name="Dinh H.H."/>
            <person name="Dong W."/>
            <person name="Draper H."/>
            <person name="Ernst S."/>
            <person name="Fu G."/>
            <person name="Gonzalez-Garay M.L."/>
            <person name="Garcia D.K."/>
            <person name="Gillett W."/>
            <person name="Gu J."/>
            <person name="Hao B."/>
            <person name="Haugen E."/>
            <person name="Havlak P."/>
            <person name="He X."/>
            <person name="Hennig S."/>
            <person name="Hu S."/>
            <person name="Huang W."/>
            <person name="Jackson L.R."/>
            <person name="Jacob L.S."/>
            <person name="Kelly S.H."/>
            <person name="Kube M."/>
            <person name="Levy R."/>
            <person name="Li Z."/>
            <person name="Liu B."/>
            <person name="Liu J."/>
            <person name="Liu W."/>
            <person name="Lu J."/>
            <person name="Maheshwari M."/>
            <person name="Nguyen B.-V."/>
            <person name="Okwuonu G.O."/>
            <person name="Palmeiri A."/>
            <person name="Pasternak S."/>
            <person name="Perez L.M."/>
            <person name="Phelps K.A."/>
            <person name="Plopper F.J."/>
            <person name="Qiang B."/>
            <person name="Raymond C."/>
            <person name="Rodriguez R."/>
            <person name="Saenphimmachak C."/>
            <person name="Santibanez J."/>
            <person name="Shen H."/>
            <person name="Shen Y."/>
            <person name="Subramanian S."/>
            <person name="Tabor P.E."/>
            <person name="Verduzco D."/>
            <person name="Waldron L."/>
            <person name="Wang J."/>
            <person name="Wang J."/>
            <person name="Wang Q."/>
            <person name="Williams G.A."/>
            <person name="Wong G.K.-S."/>
            <person name="Yao Z."/>
            <person name="Zhang J."/>
            <person name="Zhang X."/>
            <person name="Zhao G."/>
            <person name="Zhou J."/>
            <person name="Zhou Y."/>
            <person name="Nelson D."/>
            <person name="Lehrach H."/>
            <person name="Reinhardt R."/>
            <person name="Naylor S.L."/>
            <person name="Yang H."/>
            <person name="Olson M."/>
            <person name="Weinstock G."/>
            <person name="Gibbs R.A."/>
        </authorList>
    </citation>
    <scope>NUCLEOTIDE SEQUENCE [LARGE SCALE GENOMIC DNA]</scope>
</reference>
<reference key="3">
    <citation type="submission" date="2005-09" db="EMBL/GenBank/DDBJ databases">
        <authorList>
            <person name="Mural R.J."/>
            <person name="Istrail S."/>
            <person name="Sutton G.G."/>
            <person name="Florea L."/>
            <person name="Halpern A.L."/>
            <person name="Mobarry C.M."/>
            <person name="Lippert R."/>
            <person name="Walenz B."/>
            <person name="Shatkay H."/>
            <person name="Dew I."/>
            <person name="Miller J.R."/>
            <person name="Flanigan M.J."/>
            <person name="Edwards N.J."/>
            <person name="Bolanos R."/>
            <person name="Fasulo D."/>
            <person name="Halldorsson B.V."/>
            <person name="Hannenhalli S."/>
            <person name="Turner R."/>
            <person name="Yooseph S."/>
            <person name="Lu F."/>
            <person name="Nusskern D.R."/>
            <person name="Shue B.C."/>
            <person name="Zheng X.H."/>
            <person name="Zhong F."/>
            <person name="Delcher A.L."/>
            <person name="Huson D.H."/>
            <person name="Kravitz S.A."/>
            <person name="Mouchard L."/>
            <person name="Reinert K."/>
            <person name="Remington K.A."/>
            <person name="Clark A.G."/>
            <person name="Waterman M.S."/>
            <person name="Eichler E.E."/>
            <person name="Adams M.D."/>
            <person name="Hunkapiller M.W."/>
            <person name="Myers E.W."/>
            <person name="Venter J.C."/>
        </authorList>
    </citation>
    <scope>NUCLEOTIDE SEQUENCE [LARGE SCALE GENOMIC DNA]</scope>
</reference>
<reference key="4">
    <citation type="journal article" date="2004" name="Genome Res.">
        <title>The status, quality, and expansion of the NIH full-length cDNA project: the Mammalian Gene Collection (MGC).</title>
        <authorList>
            <consortium name="The MGC Project Team"/>
        </authorList>
    </citation>
    <scope>NUCLEOTIDE SEQUENCE [LARGE SCALE MRNA] (ISOFORMS 1 AND 2)</scope>
    <source>
        <tissue>Brain</tissue>
        <tissue>Cervix</tissue>
    </source>
</reference>
<reference key="5">
    <citation type="journal article" date="2003" name="J. Biol. Chem.">
        <title>The subunit composition of the human NADH dehydrogenase obtained by rapid one-step immunopurification.</title>
        <authorList>
            <person name="Murray J."/>
            <person name="Zhang B."/>
            <person name="Taylor S.W."/>
            <person name="Oglesbee D."/>
            <person name="Fahy E."/>
            <person name="Marusich M.F."/>
            <person name="Ghosh S.S."/>
            <person name="Capaldi R.A."/>
        </authorList>
    </citation>
    <scope>IDENTIFICATION IN THE NADH-UBIQUINONE OXIDOREDUCTASE COMPLEX</scope>
    <scope>IDENTIFICATION BY MASS SPECTROMETRY</scope>
    <scope>SUBCELLULAR LOCATION</scope>
</reference>
<reference key="6">
    <citation type="journal article" date="2011" name="BMC Syst. Biol.">
        <title>Initial characterization of the human central proteome.</title>
        <authorList>
            <person name="Burkard T.R."/>
            <person name="Planyavsky M."/>
            <person name="Kaupe I."/>
            <person name="Breitwieser F.P."/>
            <person name="Buerckstuemmer T."/>
            <person name="Bennett K.L."/>
            <person name="Superti-Furga G."/>
            <person name="Colinge J."/>
        </authorList>
    </citation>
    <scope>IDENTIFICATION BY MASS SPECTROMETRY [LARGE SCALE ANALYSIS]</scope>
</reference>
<reference key="7">
    <citation type="journal article" date="2012" name="Proc. Natl. Acad. Sci. U.S.A.">
        <title>N-terminal acetylome analyses and functional insights of the N-terminal acetyltransferase NatB.</title>
        <authorList>
            <person name="Van Damme P."/>
            <person name="Lasa M."/>
            <person name="Polevoda B."/>
            <person name="Gazquez C."/>
            <person name="Elosegui-Artola A."/>
            <person name="Kim D.S."/>
            <person name="De Juan-Pardo E."/>
            <person name="Demeyer K."/>
            <person name="Hole K."/>
            <person name="Larrea E."/>
            <person name="Timmerman E."/>
            <person name="Prieto J."/>
            <person name="Arnesen T."/>
            <person name="Sherman F."/>
            <person name="Gevaert K."/>
            <person name="Aldabe R."/>
        </authorList>
    </citation>
    <scope>ACETYLATION [LARGE SCALE ANALYSIS] AT SER-2</scope>
    <scope>CLEAVAGE OF INITIATOR METHIONINE [LARGE SCALE ANALYSIS]</scope>
    <scope>IDENTIFICATION BY MASS SPECTROMETRY [LARGE SCALE ANALYSIS]</scope>
</reference>
<reference key="8">
    <citation type="journal article" date="2013" name="J. Proteome Res.">
        <title>Toward a comprehensive characterization of a human cancer cell phosphoproteome.</title>
        <authorList>
            <person name="Zhou H."/>
            <person name="Di Palma S."/>
            <person name="Preisinger C."/>
            <person name="Peng M."/>
            <person name="Polat A.N."/>
            <person name="Heck A.J."/>
            <person name="Mohammed S."/>
        </authorList>
    </citation>
    <scope>PHOSPHORYLATION [LARGE SCALE ANALYSIS] AT SER-26</scope>
    <scope>IDENTIFICATION BY MASS SPECTROMETRY [LARGE SCALE ANALYSIS]</scope>
    <source>
        <tissue>Cervix carcinoma</tissue>
        <tissue>Erythroleukemia</tissue>
    </source>
</reference>
<reference key="9">
    <citation type="journal article" date="2015" name="Proteomics">
        <title>N-terminome analysis of the human mitochondrial proteome.</title>
        <authorList>
            <person name="Vaca Jacome A.S."/>
            <person name="Rabilloud T."/>
            <person name="Schaeffer-Reiss C."/>
            <person name="Rompais M."/>
            <person name="Ayoub D."/>
            <person name="Lane L."/>
            <person name="Bairoch A."/>
            <person name="Van Dorsselaer A."/>
            <person name="Carapito C."/>
        </authorList>
    </citation>
    <scope>IDENTIFICATION BY MASS SPECTROMETRY [LARGE SCALE ANALYSIS]</scope>
</reference>
<reference key="10">
    <citation type="journal article" date="2016" name="Nature">
        <title>Accessory subunits are integral for assembly and function of human mitochondrial complex I.</title>
        <authorList>
            <person name="Stroud D.A."/>
            <person name="Surgenor E.E."/>
            <person name="Formosa L.E."/>
            <person name="Reljic B."/>
            <person name="Frazier A.E."/>
            <person name="Dibley M.G."/>
            <person name="Osellame L.D."/>
            <person name="Stait T."/>
            <person name="Beilharz T.H."/>
            <person name="Thorburn D.R."/>
            <person name="Salim A."/>
            <person name="Ryan M.T."/>
        </authorList>
    </citation>
    <scope>FUNCTION</scope>
    <scope>IDENTIFICATION IN THE NADH-UBIQUINONE OXIDOREDUCTASE COMPLEX</scope>
</reference>
<keyword id="KW-0002">3D-structure</keyword>
<keyword id="KW-0007">Acetylation</keyword>
<keyword id="KW-0025">Alternative splicing</keyword>
<keyword id="KW-0249">Electron transport</keyword>
<keyword id="KW-0472">Membrane</keyword>
<keyword id="KW-0496">Mitochondrion</keyword>
<keyword id="KW-0999">Mitochondrion inner membrane</keyword>
<keyword id="KW-0597">Phosphoprotein</keyword>
<keyword id="KW-1267">Proteomics identification</keyword>
<keyword id="KW-1185">Reference proteome</keyword>
<keyword id="KW-0679">Respiratory chain</keyword>
<keyword id="KW-0812">Transmembrane</keyword>
<keyword id="KW-1133">Transmembrane helix</keyword>
<keyword id="KW-0813">Transport</keyword>
<sequence length="129" mass="15209">MSFPKYKPSSLRTLPETLDPAEYNISPETRRAQAERLAIRAQLKREYLLQYNDPNRRGLIENPALLRWAYARTINVYPNFRPTPKNSLMGALCGFGPLIFIYYIIKTERDRKEKLIQEGKLDRTFHLSY</sequence>
<protein>
    <recommendedName>
        <fullName>NADH dehydrogenase [ubiquinone] 1 beta subcomplex subunit 4</fullName>
    </recommendedName>
    <alternativeName>
        <fullName>Complex I-B15</fullName>
        <shortName>CI-B15</shortName>
    </alternativeName>
    <alternativeName>
        <fullName>NADH-ubiquinone oxidoreductase B15 subunit</fullName>
    </alternativeName>
</protein>